<keyword id="KW-0997">Cell inner membrane</keyword>
<keyword id="KW-1003">Cell membrane</keyword>
<keyword id="KW-0285">Flavoprotein</keyword>
<keyword id="KW-0288">FMN</keyword>
<keyword id="KW-0472">Membrane</keyword>
<keyword id="KW-0520">NAD</keyword>
<keyword id="KW-0560">Oxidoreductase</keyword>
<dbReference type="EC" id="1.6.5.2" evidence="1"/>
<dbReference type="EMBL" id="CP001113">
    <property type="protein sequence ID" value="ACF65422.1"/>
    <property type="molecule type" value="Genomic_DNA"/>
</dbReference>
<dbReference type="RefSeq" id="WP_000600710.1">
    <property type="nucleotide sequence ID" value="NZ_CCMR01000003.1"/>
</dbReference>
<dbReference type="SMR" id="B4T6L1"/>
<dbReference type="KEGG" id="see:SNSL254_A0090"/>
<dbReference type="HOGENOM" id="CLU_058643_0_2_6"/>
<dbReference type="Proteomes" id="UP000008824">
    <property type="component" value="Chromosome"/>
</dbReference>
<dbReference type="GO" id="GO:0005886">
    <property type="term" value="C:plasma membrane"/>
    <property type="evidence" value="ECO:0007669"/>
    <property type="project" value="UniProtKB-SubCell"/>
</dbReference>
<dbReference type="GO" id="GO:0009055">
    <property type="term" value="F:electron transfer activity"/>
    <property type="evidence" value="ECO:0007669"/>
    <property type="project" value="TreeGrafter"/>
</dbReference>
<dbReference type="GO" id="GO:0010181">
    <property type="term" value="F:FMN binding"/>
    <property type="evidence" value="ECO:0007669"/>
    <property type="project" value="UniProtKB-UniRule"/>
</dbReference>
<dbReference type="GO" id="GO:0050136">
    <property type="term" value="F:NADH:ubiquinone reductase (non-electrogenic) activity"/>
    <property type="evidence" value="ECO:0007669"/>
    <property type="project" value="RHEA"/>
</dbReference>
<dbReference type="GO" id="GO:0008753">
    <property type="term" value="F:NADPH dehydrogenase (quinone) activity"/>
    <property type="evidence" value="ECO:0007669"/>
    <property type="project" value="RHEA"/>
</dbReference>
<dbReference type="GO" id="GO:1901381">
    <property type="term" value="P:positive regulation of potassium ion transmembrane transport"/>
    <property type="evidence" value="ECO:0007669"/>
    <property type="project" value="UniProtKB-UniRule"/>
</dbReference>
<dbReference type="GO" id="GO:0006813">
    <property type="term" value="P:potassium ion transport"/>
    <property type="evidence" value="ECO:0007669"/>
    <property type="project" value="InterPro"/>
</dbReference>
<dbReference type="FunFam" id="3.40.50.360:FF:000008">
    <property type="entry name" value="Glutathione-regulated potassium-efflux system ancillary protein KefF"/>
    <property type="match status" value="1"/>
</dbReference>
<dbReference type="Gene3D" id="3.40.50.360">
    <property type="match status" value="1"/>
</dbReference>
<dbReference type="HAMAP" id="MF_01414">
    <property type="entry name" value="K_H_efflux_KefF"/>
    <property type="match status" value="1"/>
</dbReference>
<dbReference type="InterPro" id="IPR003680">
    <property type="entry name" value="Flavodoxin_fold"/>
</dbReference>
<dbReference type="InterPro" id="IPR029039">
    <property type="entry name" value="Flavoprotein-like_sf"/>
</dbReference>
<dbReference type="InterPro" id="IPR023948">
    <property type="entry name" value="K_H_efflux_KefF"/>
</dbReference>
<dbReference type="InterPro" id="IPR046980">
    <property type="entry name" value="KefG/KefF"/>
</dbReference>
<dbReference type="NCBIfam" id="NF002044">
    <property type="entry name" value="PRK00871.1"/>
    <property type="match status" value="1"/>
</dbReference>
<dbReference type="PANTHER" id="PTHR47307:SF2">
    <property type="entry name" value="GLUTATHIONE-REGULATED POTASSIUM-EFFLUX SYSTEM ANCILLARY PROTEIN KEFF"/>
    <property type="match status" value="1"/>
</dbReference>
<dbReference type="PANTHER" id="PTHR47307">
    <property type="entry name" value="GLUTATHIONE-REGULATED POTASSIUM-EFFLUX SYSTEM ANCILLARY PROTEIN KEFG"/>
    <property type="match status" value="1"/>
</dbReference>
<dbReference type="Pfam" id="PF02525">
    <property type="entry name" value="Flavodoxin_2"/>
    <property type="match status" value="1"/>
</dbReference>
<dbReference type="SUPFAM" id="SSF52218">
    <property type="entry name" value="Flavoproteins"/>
    <property type="match status" value="1"/>
</dbReference>
<comment type="function">
    <text evidence="1">Regulatory subunit of a potassium efflux system that confers protection against electrophiles. Required for full activity of KefC. Shows redox enzymatic activity, but this enzymatic activity is not required for activation of KefC.</text>
</comment>
<comment type="catalytic activity">
    <reaction evidence="1">
        <text>a quinone + NADH + H(+) = a quinol + NAD(+)</text>
        <dbReference type="Rhea" id="RHEA:46160"/>
        <dbReference type="ChEBI" id="CHEBI:15378"/>
        <dbReference type="ChEBI" id="CHEBI:24646"/>
        <dbReference type="ChEBI" id="CHEBI:57540"/>
        <dbReference type="ChEBI" id="CHEBI:57945"/>
        <dbReference type="ChEBI" id="CHEBI:132124"/>
        <dbReference type="EC" id="1.6.5.2"/>
    </reaction>
</comment>
<comment type="catalytic activity">
    <reaction evidence="1">
        <text>a quinone + NADPH + H(+) = a quinol + NADP(+)</text>
        <dbReference type="Rhea" id="RHEA:46164"/>
        <dbReference type="ChEBI" id="CHEBI:15378"/>
        <dbReference type="ChEBI" id="CHEBI:24646"/>
        <dbReference type="ChEBI" id="CHEBI:57783"/>
        <dbReference type="ChEBI" id="CHEBI:58349"/>
        <dbReference type="ChEBI" id="CHEBI:132124"/>
        <dbReference type="EC" id="1.6.5.2"/>
    </reaction>
</comment>
<comment type="cofactor">
    <cofactor evidence="1">
        <name>FMN</name>
        <dbReference type="ChEBI" id="CHEBI:58210"/>
    </cofactor>
</comment>
<comment type="subunit">
    <text evidence="1">Homodimer. Interacts with KefC.</text>
</comment>
<comment type="subcellular location">
    <subcellularLocation>
        <location evidence="1">Cell inner membrane</location>
        <topology evidence="1">Peripheral membrane protein</topology>
        <orientation evidence="1">Cytoplasmic side</orientation>
    </subcellularLocation>
</comment>
<comment type="similarity">
    <text evidence="1">Belongs to the NAD(P)H dehydrogenase (quinone) family. KefF subfamily.</text>
</comment>
<proteinExistence type="inferred from homology"/>
<organism>
    <name type="scientific">Salmonella newport (strain SL254)</name>
    <dbReference type="NCBI Taxonomy" id="423368"/>
    <lineage>
        <taxon>Bacteria</taxon>
        <taxon>Pseudomonadati</taxon>
        <taxon>Pseudomonadota</taxon>
        <taxon>Gammaproteobacteria</taxon>
        <taxon>Enterobacterales</taxon>
        <taxon>Enterobacteriaceae</taxon>
        <taxon>Salmonella</taxon>
    </lineage>
</organism>
<accession>B4T6L1</accession>
<gene>
    <name evidence="1" type="primary">kefF</name>
    <name type="ordered locus">SNSL254_A0090</name>
</gene>
<feature type="chain" id="PRO_1000145568" description="Glutathione-regulated potassium-efflux system ancillary protein KefF">
    <location>
        <begin position="1"/>
        <end position="176"/>
    </location>
</feature>
<feature type="binding site" evidence="1">
    <location>
        <position position="8"/>
    </location>
    <ligand>
        <name>FMN</name>
        <dbReference type="ChEBI" id="CHEBI:58210"/>
    </ligand>
</feature>
<feature type="binding site" evidence="1">
    <location>
        <begin position="14"/>
        <end position="17"/>
    </location>
    <ligand>
        <name>FMN</name>
        <dbReference type="ChEBI" id="CHEBI:58210"/>
    </ligand>
</feature>
<feature type="binding site" evidence="1">
    <location>
        <begin position="65"/>
        <end position="68"/>
    </location>
    <ligand>
        <name>FMN</name>
        <dbReference type="ChEBI" id="CHEBI:58210"/>
    </ligand>
</feature>
<feature type="binding site" evidence="1">
    <location>
        <begin position="105"/>
        <end position="108"/>
    </location>
    <ligand>
        <name>FMN</name>
        <dbReference type="ChEBI" id="CHEBI:58210"/>
    </ligand>
</feature>
<protein>
    <recommendedName>
        <fullName evidence="1">Glutathione-regulated potassium-efflux system ancillary protein KefF</fullName>
    </recommendedName>
    <alternativeName>
        <fullName evidence="1">Quinone oxidoreductase KefF</fullName>
        <ecNumber evidence="1">1.6.5.2</ecNumber>
    </alternativeName>
</protein>
<sequence>MILIIYAHPYPHHSHANKRMLEQAGTLENVEIRSLYHLYPDFNIDVAAEQEALSRASLIVWQHPMQWYSVPPLLKLWMDKVLTHGWAYGHGGTALHGKHLLWAVTTGGGENHFTIGSHPGFDVLSQPLQATALYCGLKWLPPFAMHCTFICDDDTLQAQARQYKQRLLAWQEVNHG</sequence>
<evidence type="ECO:0000255" key="1">
    <source>
        <dbReference type="HAMAP-Rule" id="MF_01414"/>
    </source>
</evidence>
<reference key="1">
    <citation type="journal article" date="2011" name="J. Bacteriol.">
        <title>Comparative genomics of 28 Salmonella enterica isolates: evidence for CRISPR-mediated adaptive sublineage evolution.</title>
        <authorList>
            <person name="Fricke W.F."/>
            <person name="Mammel M.K."/>
            <person name="McDermott P.F."/>
            <person name="Tartera C."/>
            <person name="White D.G."/>
            <person name="Leclerc J.E."/>
            <person name="Ravel J."/>
            <person name="Cebula T.A."/>
        </authorList>
    </citation>
    <scope>NUCLEOTIDE SEQUENCE [LARGE SCALE GENOMIC DNA]</scope>
    <source>
        <strain>SL254</strain>
    </source>
</reference>
<name>KEFF_SALNS</name>